<reference key="1">
    <citation type="submission" date="2008-02" db="EMBL/GenBank/DDBJ databases">
        <title>Complete sequence of Escherichia coli C str. ATCC 8739.</title>
        <authorList>
            <person name="Copeland A."/>
            <person name="Lucas S."/>
            <person name="Lapidus A."/>
            <person name="Glavina del Rio T."/>
            <person name="Dalin E."/>
            <person name="Tice H."/>
            <person name="Bruce D."/>
            <person name="Goodwin L."/>
            <person name="Pitluck S."/>
            <person name="Kiss H."/>
            <person name="Brettin T."/>
            <person name="Detter J.C."/>
            <person name="Han C."/>
            <person name="Kuske C.R."/>
            <person name="Schmutz J."/>
            <person name="Larimer F."/>
            <person name="Land M."/>
            <person name="Hauser L."/>
            <person name="Kyrpides N."/>
            <person name="Mikhailova N."/>
            <person name="Ingram L."/>
            <person name="Richardson P."/>
        </authorList>
    </citation>
    <scope>NUCLEOTIDE SEQUENCE [LARGE SCALE GENOMIC DNA]</scope>
    <source>
        <strain>ATCC 8739 / DSM 1576 / NBRC 3972 / NCIMB 8545 / WDCM 00012 / Crooks</strain>
    </source>
</reference>
<accession>B1IQY0</accession>
<dbReference type="EMBL" id="CP000946">
    <property type="protein sequence ID" value="ACA77664.1"/>
    <property type="molecule type" value="Genomic_DNA"/>
</dbReference>
<dbReference type="RefSeq" id="WP_001295399.1">
    <property type="nucleotide sequence ID" value="NZ_MTFT01000006.1"/>
</dbReference>
<dbReference type="SMR" id="B1IQY0"/>
<dbReference type="GeneID" id="93775758"/>
<dbReference type="KEGG" id="ecl:EcolC_2020"/>
<dbReference type="HOGENOM" id="CLU_078181_0_0_6"/>
<dbReference type="GO" id="GO:0005737">
    <property type="term" value="C:cytoplasm"/>
    <property type="evidence" value="ECO:0007669"/>
    <property type="project" value="UniProtKB-SubCell"/>
</dbReference>
<dbReference type="GO" id="GO:0003677">
    <property type="term" value="F:DNA binding"/>
    <property type="evidence" value="ECO:0007669"/>
    <property type="project" value="UniProtKB-UniRule"/>
</dbReference>
<dbReference type="GO" id="GO:0006274">
    <property type="term" value="P:DNA replication termination"/>
    <property type="evidence" value="ECO:0007669"/>
    <property type="project" value="UniProtKB-UniRule"/>
</dbReference>
<dbReference type="Gene3D" id="3.30.54.10">
    <property type="match status" value="1"/>
</dbReference>
<dbReference type="Gene3D" id="3.50.14.10">
    <property type="entry name" value="Replication terminator Tus, domain 1 superfamily/Replication terminator Tus"/>
    <property type="match status" value="1"/>
</dbReference>
<dbReference type="HAMAP" id="MF_00483">
    <property type="entry name" value="Rep_term_Tus"/>
    <property type="match status" value="1"/>
</dbReference>
<dbReference type="InterPro" id="IPR008865">
    <property type="entry name" value="DNA_replication_term_site-bd"/>
</dbReference>
<dbReference type="InterPro" id="IPR036381">
    <property type="entry name" value="Tus_dom1"/>
</dbReference>
<dbReference type="InterPro" id="IPR036384">
    <property type="entry name" value="Tus_sf"/>
</dbReference>
<dbReference type="NCBIfam" id="TIGR02648">
    <property type="entry name" value="rep_term_tus"/>
    <property type="match status" value="1"/>
</dbReference>
<dbReference type="Pfam" id="PF05472">
    <property type="entry name" value="Ter"/>
    <property type="match status" value="1"/>
</dbReference>
<dbReference type="SUPFAM" id="SSF56596">
    <property type="entry name" value="Replication terminator protein (Tus)"/>
    <property type="match status" value="1"/>
</dbReference>
<proteinExistence type="inferred from homology"/>
<sequence>MARYDLVDRLNTTFRQMEQELAAFAAHLEQHKLLVARVFSLPEVKKEDEHNPLNRIEVKQHLGNDAQSLALRHFRHLFIQQQSENRSSKAAVRLPGVLCYQVDNLSQAALVSHIQHINKLKTTFEHIVTVESELPTAARFEWVHRHLPGLITLNAYRTLTVLHDPATLRFGWANKHIIKNLHRDEVLAQLEKSLKSPRSVAPWTREEWQRKLEREYQDIAALPQNAKLKIKRPVKVQPIARVWYKGDQKQVQHACPTPLIALINRDNGAGVPDVGELLNYDADNVQHRYKPQAQPLRLIIPRLHLYVAD</sequence>
<feature type="chain" id="PRO_1000081315" description="DNA replication terminus site-binding protein">
    <location>
        <begin position="1"/>
        <end position="309"/>
    </location>
</feature>
<organism>
    <name type="scientific">Escherichia coli (strain ATCC 8739 / DSM 1576 / NBRC 3972 / NCIMB 8545 / WDCM 00012 / Crooks)</name>
    <dbReference type="NCBI Taxonomy" id="481805"/>
    <lineage>
        <taxon>Bacteria</taxon>
        <taxon>Pseudomonadati</taxon>
        <taxon>Pseudomonadota</taxon>
        <taxon>Gammaproteobacteria</taxon>
        <taxon>Enterobacterales</taxon>
        <taxon>Enterobacteriaceae</taxon>
        <taxon>Escherichia</taxon>
    </lineage>
</organism>
<gene>
    <name evidence="1" type="primary">tus</name>
    <name type="ordered locus">EcolC_2020</name>
</gene>
<evidence type="ECO:0000255" key="1">
    <source>
        <dbReference type="HAMAP-Rule" id="MF_00483"/>
    </source>
</evidence>
<name>TUS_ECOLC</name>
<keyword id="KW-0963">Cytoplasm</keyword>
<keyword id="KW-0235">DNA replication</keyword>
<keyword id="KW-0238">DNA-binding</keyword>
<protein>
    <recommendedName>
        <fullName evidence="1">DNA replication terminus site-binding protein</fullName>
        <shortName evidence="1">Ter-binding protein</shortName>
    </recommendedName>
</protein>
<comment type="function">
    <text evidence="1">Trans-acting protein required for termination of DNA replication. Binds to DNA replication terminator sequences (terA to terF) to prevent the passage of replication forks. The termination efficiency will be affected by the affinity of this protein for the terminator sequence.</text>
</comment>
<comment type="subcellular location">
    <subcellularLocation>
        <location evidence="1">Cytoplasm</location>
    </subcellularLocation>
</comment>
<comment type="similarity">
    <text evidence="1">Belongs to the Tus family.</text>
</comment>